<organism evidence="10">
    <name type="scientific">Drosophila melanogaster</name>
    <name type="common">Fruit fly</name>
    <dbReference type="NCBI Taxonomy" id="7227"/>
    <lineage>
        <taxon>Eukaryota</taxon>
        <taxon>Metazoa</taxon>
        <taxon>Ecdysozoa</taxon>
        <taxon>Arthropoda</taxon>
        <taxon>Hexapoda</taxon>
        <taxon>Insecta</taxon>
        <taxon>Pterygota</taxon>
        <taxon>Neoptera</taxon>
        <taxon>Endopterygota</taxon>
        <taxon>Diptera</taxon>
        <taxon>Brachycera</taxon>
        <taxon>Muscomorpha</taxon>
        <taxon>Ephydroidea</taxon>
        <taxon>Drosophilidae</taxon>
        <taxon>Drosophila</taxon>
        <taxon>Sophophora</taxon>
    </lineage>
</organism>
<comment type="function">
    <text evidence="2">Probably involved in the antiviral immune response (PubMed:18953338). May have a role in controlling viral load in the adult fat body, after infection with viruses such as the Drosophila C virus (PubMed:18953338).</text>
</comment>
<comment type="subcellular location">
    <subcellularLocation>
        <location evidence="3">Secreted</location>
    </subcellularLocation>
    <text evidence="3">Expressed in hemolymph.</text>
</comment>
<comment type="tissue specificity">
    <text evidence="2">Expressed in fat body.</text>
</comment>
<comment type="induction">
    <text evidence="2 3">Strongly up-regulated in response to viral infection by the Drosophila C virus, alphavirus Sindbis virus and Nora virus (PubMed:18953338, PubMed:32878003). Up-regulation increases between 1 and 3 hours after infection with the Drosophila C virus (PubMed:18953338). Up-regulation increases between 1 and 6 hours after infection with the Sindbis virus, exhibiting a dramatic increase at 6 hours (PubMed:18953338). Induced in the fat body following infection with the Drosophila C virus (PubMed:18953338). In hemolymph of flies infected with Nora virus, levels of expression increase by approximately 4-fold 3 and 17 days after infection, by 1-fold 10 days after infection, and by 2-fold 24 days after infection, compared to uninfected flies (PubMed:32878003). Very weakly to not up-regulated by infection with the Gram-negative bacteria E.cloacae and E.coli, or the Gram-positive bacteria M.luteus and E.fecalis (PubMed:18953338). Not up-regulated by the plus-strand RNA virus, the Nodavirus flock house virus, or the fungus B.bassiana (PubMed:18953338).</text>
</comment>
<comment type="sequence caution" evidence="5">
    <conflict type="erroneous termination">
        <sequence resource="EMBL-CDS" id="AAM29632"/>
    </conflict>
    <text>Truncated C-terminus.</text>
</comment>
<accession>Q9VZ35</accession>
<accession>D2NUJ3</accession>
<accession>Q8MYS7</accession>
<name>VAGO_DROME</name>
<protein>
    <recommendedName>
        <fullName evidence="4">Protein Vago</fullName>
    </recommendedName>
</protein>
<sequence>MESISSMIYLVAMMSLIIGGSQAIPYRPSAYLYNQQYCMDTLTGRQLYIGEVFTREDQCVRIQCLETLQLWEDSCQVPKLTQGNCTPVPSTNPHAEYPRCCPLYECKSYESNSGGTLEQTNIYDHYGTLRSSHLTEMIVIDGRTPPRGEIHTASARKYQV</sequence>
<keyword id="KW-0051">Antiviral defense</keyword>
<keyword id="KW-1185">Reference proteome</keyword>
<keyword id="KW-0964">Secreted</keyword>
<keyword id="KW-0732">Signal</keyword>
<dbReference type="EMBL" id="AE014298">
    <property type="protein sequence ID" value="AAF47993.1"/>
    <property type="molecule type" value="Genomic_DNA"/>
</dbReference>
<dbReference type="EMBL" id="AE014298">
    <property type="protein sequence ID" value="AHN59576.1"/>
    <property type="molecule type" value="Genomic_DNA"/>
</dbReference>
<dbReference type="EMBL" id="BT120136">
    <property type="protein sequence ID" value="ADB57057.1"/>
    <property type="molecule type" value="mRNA"/>
</dbReference>
<dbReference type="EMBL" id="AY113627">
    <property type="protein sequence ID" value="AAM29632.1"/>
    <property type="status" value="ALT_TERM"/>
    <property type="molecule type" value="mRNA"/>
</dbReference>
<dbReference type="RefSeq" id="NP_001285106.1">
    <property type="nucleotide sequence ID" value="NM_001298177.1"/>
</dbReference>
<dbReference type="RefSeq" id="NP_572680.1">
    <property type="nucleotide sequence ID" value="NM_132452.3"/>
</dbReference>
<dbReference type="FunCoup" id="Q9VZ35">
    <property type="interactions" value="72"/>
</dbReference>
<dbReference type="STRING" id="7227.FBpp0312036"/>
<dbReference type="PaxDb" id="7227-FBpp0073283"/>
<dbReference type="DNASU" id="32040"/>
<dbReference type="EnsemblMetazoa" id="FBtr0073427">
    <property type="protein sequence ID" value="FBpp0073283"/>
    <property type="gene ID" value="FBgn0030262"/>
</dbReference>
<dbReference type="EnsemblMetazoa" id="FBtr0346279">
    <property type="protein sequence ID" value="FBpp0312036"/>
    <property type="gene ID" value="FBgn0030262"/>
</dbReference>
<dbReference type="GeneID" id="32040"/>
<dbReference type="KEGG" id="dme:Dmel_CG2081"/>
<dbReference type="UCSC" id="CG2081-RB">
    <property type="organism name" value="d. melanogaster"/>
</dbReference>
<dbReference type="AGR" id="FB:FBgn0030262"/>
<dbReference type="CTD" id="32040"/>
<dbReference type="FlyBase" id="FBgn0030262">
    <property type="gene designation" value="Vago"/>
</dbReference>
<dbReference type="VEuPathDB" id="VectorBase:FBgn0030262"/>
<dbReference type="eggNOG" id="ENOG502TCTT">
    <property type="taxonomic scope" value="Eukaryota"/>
</dbReference>
<dbReference type="GeneTree" id="ENSGT00940000176314"/>
<dbReference type="HOGENOM" id="CLU_1827300_0_0_1"/>
<dbReference type="InParanoid" id="Q9VZ35"/>
<dbReference type="OMA" id="LESQQLW"/>
<dbReference type="OrthoDB" id="7769664at2759"/>
<dbReference type="BioGRID-ORCS" id="32040">
    <property type="hits" value="0 hits in 1 CRISPR screen"/>
</dbReference>
<dbReference type="GenomeRNAi" id="32040"/>
<dbReference type="PRO" id="PR:Q9VZ35"/>
<dbReference type="Proteomes" id="UP000000803">
    <property type="component" value="Chromosome X"/>
</dbReference>
<dbReference type="Bgee" id="FBgn0030262">
    <property type="expression patterns" value="Expressed in fat body cell in male reproductive gland and 34 other cell types or tissues"/>
</dbReference>
<dbReference type="ExpressionAtlas" id="Q9VZ35">
    <property type="expression patterns" value="differential"/>
</dbReference>
<dbReference type="GO" id="GO:0005615">
    <property type="term" value="C:extracellular space"/>
    <property type="evidence" value="ECO:0000255"/>
    <property type="project" value="FlyBase"/>
</dbReference>
<dbReference type="GO" id="GO:0051607">
    <property type="term" value="P:defense response to virus"/>
    <property type="evidence" value="ECO:0000315"/>
    <property type="project" value="FlyBase"/>
</dbReference>
<dbReference type="InterPro" id="IPR029277">
    <property type="entry name" value="SVWC_dom"/>
</dbReference>
<dbReference type="InterPro" id="IPR053308">
    <property type="entry name" value="Vago-like"/>
</dbReference>
<dbReference type="PANTHER" id="PTHR39957">
    <property type="entry name" value="AT09846P1-RELATED"/>
    <property type="match status" value="1"/>
</dbReference>
<dbReference type="PANTHER" id="PTHR39957:SF1">
    <property type="entry name" value="AT09846P1-RELATED"/>
    <property type="match status" value="1"/>
</dbReference>
<dbReference type="Pfam" id="PF15430">
    <property type="entry name" value="SVWC"/>
    <property type="match status" value="1"/>
</dbReference>
<dbReference type="SMART" id="SM01318">
    <property type="entry name" value="SVWC"/>
    <property type="match status" value="1"/>
</dbReference>
<feature type="signal peptide" evidence="1">
    <location>
        <begin position="1"/>
        <end position="23"/>
    </location>
</feature>
<feature type="chain" id="PRO_5015100774" description="Protein Vago" evidence="1">
    <location>
        <begin position="24"/>
        <end position="160"/>
    </location>
</feature>
<feature type="sequence conflict" description="In Ref. 4; AAM29632." evidence="5" ref="4">
    <original>S</original>
    <variation>R</variation>
    <location>
        <position position="74"/>
    </location>
</feature>
<gene>
    <name evidence="9" type="primary">Vago</name>
    <name evidence="6" type="synonym">DIGF-2</name>
    <name evidence="9" type="ORF">CG2081</name>
</gene>
<proteinExistence type="evidence at transcript level"/>
<reference evidence="10" key="1">
    <citation type="journal article" date="2000" name="Science">
        <title>The genome sequence of Drosophila melanogaster.</title>
        <authorList>
            <person name="Adams M.D."/>
            <person name="Celniker S.E."/>
            <person name="Holt R.A."/>
            <person name="Evans C.A."/>
            <person name="Gocayne J.D."/>
            <person name="Amanatides P.G."/>
            <person name="Scherer S.E."/>
            <person name="Li P.W."/>
            <person name="Hoskins R.A."/>
            <person name="Galle R.F."/>
            <person name="George R.A."/>
            <person name="Lewis S.E."/>
            <person name="Richards S."/>
            <person name="Ashburner M."/>
            <person name="Henderson S.N."/>
            <person name="Sutton G.G."/>
            <person name="Wortman J.R."/>
            <person name="Yandell M.D."/>
            <person name="Zhang Q."/>
            <person name="Chen L.X."/>
            <person name="Brandon R.C."/>
            <person name="Rogers Y.-H.C."/>
            <person name="Blazej R.G."/>
            <person name="Champe M."/>
            <person name="Pfeiffer B.D."/>
            <person name="Wan K.H."/>
            <person name="Doyle C."/>
            <person name="Baxter E.G."/>
            <person name="Helt G."/>
            <person name="Nelson C.R."/>
            <person name="Miklos G.L.G."/>
            <person name="Abril J.F."/>
            <person name="Agbayani A."/>
            <person name="An H.-J."/>
            <person name="Andrews-Pfannkoch C."/>
            <person name="Baldwin D."/>
            <person name="Ballew R.M."/>
            <person name="Basu A."/>
            <person name="Baxendale J."/>
            <person name="Bayraktaroglu L."/>
            <person name="Beasley E.M."/>
            <person name="Beeson K.Y."/>
            <person name="Benos P.V."/>
            <person name="Berman B.P."/>
            <person name="Bhandari D."/>
            <person name="Bolshakov S."/>
            <person name="Borkova D."/>
            <person name="Botchan M.R."/>
            <person name="Bouck J."/>
            <person name="Brokstein P."/>
            <person name="Brottier P."/>
            <person name="Burtis K.C."/>
            <person name="Busam D.A."/>
            <person name="Butler H."/>
            <person name="Cadieu E."/>
            <person name="Center A."/>
            <person name="Chandra I."/>
            <person name="Cherry J.M."/>
            <person name="Cawley S."/>
            <person name="Dahlke C."/>
            <person name="Davenport L.B."/>
            <person name="Davies P."/>
            <person name="de Pablos B."/>
            <person name="Delcher A."/>
            <person name="Deng Z."/>
            <person name="Mays A.D."/>
            <person name="Dew I."/>
            <person name="Dietz S.M."/>
            <person name="Dodson K."/>
            <person name="Doup L.E."/>
            <person name="Downes M."/>
            <person name="Dugan-Rocha S."/>
            <person name="Dunkov B.C."/>
            <person name="Dunn P."/>
            <person name="Durbin K.J."/>
            <person name="Evangelista C.C."/>
            <person name="Ferraz C."/>
            <person name="Ferriera S."/>
            <person name="Fleischmann W."/>
            <person name="Fosler C."/>
            <person name="Gabrielian A.E."/>
            <person name="Garg N.S."/>
            <person name="Gelbart W.M."/>
            <person name="Glasser K."/>
            <person name="Glodek A."/>
            <person name="Gong F."/>
            <person name="Gorrell J.H."/>
            <person name="Gu Z."/>
            <person name="Guan P."/>
            <person name="Harris M."/>
            <person name="Harris N.L."/>
            <person name="Harvey D.A."/>
            <person name="Heiman T.J."/>
            <person name="Hernandez J.R."/>
            <person name="Houck J."/>
            <person name="Hostin D."/>
            <person name="Houston K.A."/>
            <person name="Howland T.J."/>
            <person name="Wei M.-H."/>
            <person name="Ibegwam C."/>
            <person name="Jalali M."/>
            <person name="Kalush F."/>
            <person name="Karpen G.H."/>
            <person name="Ke Z."/>
            <person name="Kennison J.A."/>
            <person name="Ketchum K.A."/>
            <person name="Kimmel B.E."/>
            <person name="Kodira C.D."/>
            <person name="Kraft C.L."/>
            <person name="Kravitz S."/>
            <person name="Kulp D."/>
            <person name="Lai Z."/>
            <person name="Lasko P."/>
            <person name="Lei Y."/>
            <person name="Levitsky A.A."/>
            <person name="Li J.H."/>
            <person name="Li Z."/>
            <person name="Liang Y."/>
            <person name="Lin X."/>
            <person name="Liu X."/>
            <person name="Mattei B."/>
            <person name="McIntosh T.C."/>
            <person name="McLeod M.P."/>
            <person name="McPherson D."/>
            <person name="Merkulov G."/>
            <person name="Milshina N.V."/>
            <person name="Mobarry C."/>
            <person name="Morris J."/>
            <person name="Moshrefi A."/>
            <person name="Mount S.M."/>
            <person name="Moy M."/>
            <person name="Murphy B."/>
            <person name="Murphy L."/>
            <person name="Muzny D.M."/>
            <person name="Nelson D.L."/>
            <person name="Nelson D.R."/>
            <person name="Nelson K.A."/>
            <person name="Nixon K."/>
            <person name="Nusskern D.R."/>
            <person name="Pacleb J.M."/>
            <person name="Palazzolo M."/>
            <person name="Pittman G.S."/>
            <person name="Pan S."/>
            <person name="Pollard J."/>
            <person name="Puri V."/>
            <person name="Reese M.G."/>
            <person name="Reinert K."/>
            <person name="Remington K."/>
            <person name="Saunders R.D.C."/>
            <person name="Scheeler F."/>
            <person name="Shen H."/>
            <person name="Shue B.C."/>
            <person name="Siden-Kiamos I."/>
            <person name="Simpson M."/>
            <person name="Skupski M.P."/>
            <person name="Smith T.J."/>
            <person name="Spier E."/>
            <person name="Spradling A.C."/>
            <person name="Stapleton M."/>
            <person name="Strong R."/>
            <person name="Sun E."/>
            <person name="Svirskas R."/>
            <person name="Tector C."/>
            <person name="Turner R."/>
            <person name="Venter E."/>
            <person name="Wang A.H."/>
            <person name="Wang X."/>
            <person name="Wang Z.-Y."/>
            <person name="Wassarman D.A."/>
            <person name="Weinstock G.M."/>
            <person name="Weissenbach J."/>
            <person name="Williams S.M."/>
            <person name="Woodage T."/>
            <person name="Worley K.C."/>
            <person name="Wu D."/>
            <person name="Yang S."/>
            <person name="Yao Q.A."/>
            <person name="Ye J."/>
            <person name="Yeh R.-F."/>
            <person name="Zaveri J.S."/>
            <person name="Zhan M."/>
            <person name="Zhang G."/>
            <person name="Zhao Q."/>
            <person name="Zheng L."/>
            <person name="Zheng X.H."/>
            <person name="Zhong F.N."/>
            <person name="Zhong W."/>
            <person name="Zhou X."/>
            <person name="Zhu S.C."/>
            <person name="Zhu X."/>
            <person name="Smith H.O."/>
            <person name="Gibbs R.A."/>
            <person name="Myers E.W."/>
            <person name="Rubin G.M."/>
            <person name="Venter J.C."/>
        </authorList>
    </citation>
    <scope>NUCLEOTIDE SEQUENCE [LARGE SCALE GENOMIC DNA]</scope>
    <source>
        <strain evidence="10">Berkeley</strain>
    </source>
</reference>
<reference evidence="10" key="2">
    <citation type="journal article" date="2002" name="Genome Biol.">
        <title>Annotation of the Drosophila melanogaster euchromatic genome: a systematic review.</title>
        <authorList>
            <person name="Misra S."/>
            <person name="Crosby M.A."/>
            <person name="Mungall C.J."/>
            <person name="Matthews B.B."/>
            <person name="Campbell K.S."/>
            <person name="Hradecky P."/>
            <person name="Huang Y."/>
            <person name="Kaminker J.S."/>
            <person name="Millburn G.H."/>
            <person name="Prochnik S.E."/>
            <person name="Smith C.D."/>
            <person name="Tupy J.L."/>
            <person name="Whitfield E.J."/>
            <person name="Bayraktaroglu L."/>
            <person name="Berman B.P."/>
            <person name="Bettencourt B.R."/>
            <person name="Celniker S.E."/>
            <person name="de Grey A.D.N.J."/>
            <person name="Drysdale R.A."/>
            <person name="Harris N.L."/>
            <person name="Richter J."/>
            <person name="Russo S."/>
            <person name="Schroeder A.J."/>
            <person name="Shu S.Q."/>
            <person name="Stapleton M."/>
            <person name="Yamada C."/>
            <person name="Ashburner M."/>
            <person name="Gelbart W.M."/>
            <person name="Rubin G.M."/>
            <person name="Lewis S.E."/>
        </authorList>
    </citation>
    <scope>GENOME REANNOTATION</scope>
    <source>
        <strain evidence="10">Berkeley</strain>
    </source>
</reference>
<reference evidence="8" key="3">
    <citation type="submission" date="2010-01" db="EMBL/GenBank/DDBJ databases">
        <authorList>
            <person name="Carlson J."/>
            <person name="Booth B."/>
            <person name="Frise E."/>
            <person name="Park S."/>
            <person name="Wan K."/>
            <person name="Yu C."/>
            <person name="Celniker S."/>
        </authorList>
    </citation>
    <scope>NUCLEOTIDE SEQUENCE [LARGE SCALE MRNA]</scope>
    <source>
        <strain evidence="8">Berkeley</strain>
        <tissue evidence="8">Head</tissue>
    </source>
</reference>
<reference evidence="7" key="4">
    <citation type="journal article" date="2002" name="Genome Biol.">
        <title>A Drosophila full-length cDNA resource.</title>
        <authorList>
            <person name="Stapleton M."/>
            <person name="Carlson J.W."/>
            <person name="Brokstein P."/>
            <person name="Yu C."/>
            <person name="Champe M."/>
            <person name="George R.A."/>
            <person name="Guarin H."/>
            <person name="Kronmiller B."/>
            <person name="Pacleb J.M."/>
            <person name="Park S."/>
            <person name="Wan K.H."/>
            <person name="Rubin G.M."/>
            <person name="Celniker S.E."/>
        </authorList>
    </citation>
    <scope>NUCLEOTIDE SEQUENCE [LARGE SCALE MRNA] OF 1-74</scope>
    <source>
        <strain evidence="7">Berkeley</strain>
        <tissue evidence="7">Head</tissue>
    </source>
</reference>
<reference evidence="5" key="5">
    <citation type="journal article" date="2008" name="Nat. Immunol.">
        <title>The DExD/H-box helicase Dicer-2 mediates the induction of antiviral activity in drosophila.</title>
        <authorList>
            <person name="Deddouche S."/>
            <person name="Matt N."/>
            <person name="Budd A."/>
            <person name="Mueller S."/>
            <person name="Kemp C."/>
            <person name="Galiana-Arnoux D."/>
            <person name="Dostert C."/>
            <person name="Antoniewski C."/>
            <person name="Hoffmann J.A."/>
            <person name="Imler J.L."/>
        </authorList>
    </citation>
    <scope>FUNCTION</scope>
    <scope>TISSUE SPECIFICITY</scope>
    <scope>INDUCTION BY VIRAL INFECTION</scope>
</reference>
<reference evidence="5" key="6">
    <citation type="journal article" date="2020" name="Vaccines (Basel)">
        <title>Nora Virus VP4b and ORF1 Circulate in Hemolymph of Infected D. melanogaster with Coordinate Expression of Vago and Vir-1.</title>
        <authorList>
            <person name="Macke A."/>
            <person name="Lopez W."/>
            <person name="Carlson D.J."/>
            <person name="Carlson K.A."/>
        </authorList>
    </citation>
    <scope>SUBCELLULAR LOCATION</scope>
    <scope>INDUCTION BY VIRAL INFECTION</scope>
</reference>
<evidence type="ECO:0000255" key="1"/>
<evidence type="ECO:0000269" key="2">
    <source>
    </source>
</evidence>
<evidence type="ECO:0000269" key="3">
    <source>
    </source>
</evidence>
<evidence type="ECO:0000303" key="4">
    <source>
    </source>
</evidence>
<evidence type="ECO:0000305" key="5"/>
<evidence type="ECO:0000312" key="6">
    <source>
        <dbReference type="EMBL" id="AAF47993.1"/>
    </source>
</evidence>
<evidence type="ECO:0000312" key="7">
    <source>
        <dbReference type="EMBL" id="AAM29632.1"/>
    </source>
</evidence>
<evidence type="ECO:0000312" key="8">
    <source>
        <dbReference type="EMBL" id="ADB57057.1"/>
    </source>
</evidence>
<evidence type="ECO:0000312" key="9">
    <source>
        <dbReference type="FlyBase" id="FBgn0030262"/>
    </source>
</evidence>
<evidence type="ECO:0000312" key="10">
    <source>
        <dbReference type="Proteomes" id="UP000000803"/>
    </source>
</evidence>